<proteinExistence type="evidence at protein level"/>
<dbReference type="EMBL" id="U00096">
    <property type="protein sequence ID" value="ABP93446.1"/>
    <property type="molecule type" value="Genomic_DNA"/>
</dbReference>
<dbReference type="EMBL" id="AP009048">
    <property type="status" value="NOT_ANNOTATED_CDS"/>
    <property type="molecule type" value="Genomic_DNA"/>
</dbReference>
<dbReference type="RefSeq" id="WP_000233093.1">
    <property type="nucleotide sequence ID" value="NZ_LN832404.1"/>
</dbReference>
<dbReference type="RefSeq" id="YP_001165320.1">
    <property type="nucleotide sequence ID" value="NC_000913.3"/>
</dbReference>
<dbReference type="STRING" id="511145.b4601"/>
<dbReference type="PaxDb" id="511145-b4601"/>
<dbReference type="EnsemblBacteria" id="ABP93446">
    <property type="protein sequence ID" value="ABP93446"/>
    <property type="gene ID" value="b4601"/>
</dbReference>
<dbReference type="GeneID" id="5061510"/>
<dbReference type="KEGG" id="eco:b4601"/>
<dbReference type="KEGG" id="ecoc:C3026_09200"/>
<dbReference type="PATRIC" id="fig|83333.103.peg.2435"/>
<dbReference type="InParanoid" id="A5A617"/>
<dbReference type="BioCyc" id="EcoCyc:MONOMER0-2821"/>
<dbReference type="PRO" id="PR:A5A617"/>
<dbReference type="Proteomes" id="UP000000625">
    <property type="component" value="Chromosome"/>
</dbReference>
<dbReference type="NCBIfam" id="NF011341">
    <property type="entry name" value="PRK14758.1"/>
    <property type="match status" value="1"/>
</dbReference>
<sequence length="27" mass="3236">MVGRYRFEFILIILILCALITARFYLS</sequence>
<feature type="chain" id="PRO_0000312016" description="Uncharacterized protein YdgU">
    <location>
        <begin position="1"/>
        <end position="27"/>
    </location>
</feature>
<reference key="1">
    <citation type="journal article" date="1997" name="Science">
        <title>The complete genome sequence of Escherichia coli K-12.</title>
        <authorList>
            <person name="Blattner F.R."/>
            <person name="Plunkett G. III"/>
            <person name="Bloch C.A."/>
            <person name="Perna N.T."/>
            <person name="Burland V."/>
            <person name="Riley M."/>
            <person name="Collado-Vides J."/>
            <person name="Glasner J.D."/>
            <person name="Rode C.K."/>
            <person name="Mayhew G.F."/>
            <person name="Gregor J."/>
            <person name="Davis N.W."/>
            <person name="Kirkpatrick H.A."/>
            <person name="Goeden M.A."/>
            <person name="Rose D.J."/>
            <person name="Mau B."/>
            <person name="Shao Y."/>
        </authorList>
    </citation>
    <scope>NUCLEOTIDE SEQUENCE [LARGE SCALE GENOMIC DNA]</scope>
    <source>
        <strain>K12 / MG1655 / ATCC 47076</strain>
    </source>
</reference>
<reference key="2">
    <citation type="journal article" date="2006" name="Mol. Syst. Biol.">
        <title>Highly accurate genome sequences of Escherichia coli K-12 strains MG1655 and W3110.</title>
        <authorList>
            <person name="Hayashi K."/>
            <person name="Morooka N."/>
            <person name="Yamamoto Y."/>
            <person name="Fujita K."/>
            <person name="Isono K."/>
            <person name="Choi S."/>
            <person name="Ohtsubo E."/>
            <person name="Baba T."/>
            <person name="Wanner B.L."/>
            <person name="Mori H."/>
            <person name="Horiuchi T."/>
        </authorList>
    </citation>
    <scope>NUCLEOTIDE SEQUENCE [LARGE SCALE GENOMIC DNA]</scope>
    <source>
        <strain>K12 / W3110 / ATCC 27325 / DSM 5911</strain>
    </source>
</reference>
<reference key="3">
    <citation type="journal article" date="2008" name="Mol. Microbiol.">
        <title>Small membrane proteins found by comparative genomics and ribosome binding site models.</title>
        <authorList>
            <person name="Hemm M.R."/>
            <person name="Paul B.J."/>
            <person name="Schneider T.D."/>
            <person name="Storz G."/>
            <person name="Rudd K.E."/>
        </authorList>
    </citation>
    <scope>INDUCTION</scope>
    <source>
        <strain>K12 / MG1655 / ATCC 47076</strain>
    </source>
</reference>
<comment type="induction">
    <text evidence="1">Expressed during stationary phase (at protein level).</text>
</comment>
<keyword id="KW-1185">Reference proteome</keyword>
<name>YDGU_ECOLI</name>
<gene>
    <name type="primary">ydgU</name>
    <name type="ordered locus">b4601</name>
    <name type="ordered locus">JW1589</name>
</gene>
<protein>
    <recommendedName>
        <fullName>Uncharacterized protein YdgU</fullName>
    </recommendedName>
</protein>
<evidence type="ECO:0000269" key="1">
    <source>
    </source>
</evidence>
<accession>A5A617</accession>
<organism>
    <name type="scientific">Escherichia coli (strain K12)</name>
    <dbReference type="NCBI Taxonomy" id="83333"/>
    <lineage>
        <taxon>Bacteria</taxon>
        <taxon>Pseudomonadati</taxon>
        <taxon>Pseudomonadota</taxon>
        <taxon>Gammaproteobacteria</taxon>
        <taxon>Enterobacterales</taxon>
        <taxon>Enterobacteriaceae</taxon>
        <taxon>Escherichia</taxon>
    </lineage>
</organism>